<evidence type="ECO:0000255" key="1">
    <source>
        <dbReference type="HAMAP-Rule" id="MF_01720"/>
    </source>
</evidence>
<gene>
    <name evidence="1" type="primary">macB</name>
    <name type="ordered locus">NMB0549</name>
</gene>
<organism>
    <name type="scientific">Neisseria meningitidis serogroup B (strain ATCC BAA-335 / MC58)</name>
    <dbReference type="NCBI Taxonomy" id="122586"/>
    <lineage>
        <taxon>Bacteria</taxon>
        <taxon>Pseudomonadati</taxon>
        <taxon>Pseudomonadota</taxon>
        <taxon>Betaproteobacteria</taxon>
        <taxon>Neisseriales</taxon>
        <taxon>Neisseriaceae</taxon>
        <taxon>Neisseria</taxon>
    </lineage>
</organism>
<keyword id="KW-0046">Antibiotic resistance</keyword>
<keyword id="KW-0067">ATP-binding</keyword>
<keyword id="KW-0997">Cell inner membrane</keyword>
<keyword id="KW-1003">Cell membrane</keyword>
<keyword id="KW-0472">Membrane</keyword>
<keyword id="KW-0547">Nucleotide-binding</keyword>
<keyword id="KW-1185">Reference proteome</keyword>
<keyword id="KW-1278">Translocase</keyword>
<keyword id="KW-0812">Transmembrane</keyword>
<keyword id="KW-1133">Transmembrane helix</keyword>
<keyword id="KW-0813">Transport</keyword>
<protein>
    <recommendedName>
        <fullName evidence="1">Macrolide export ATP-binding/permease protein MacB</fullName>
        <ecNumber evidence="1">7.6.2.-</ecNumber>
    </recommendedName>
</protein>
<feature type="chain" id="PRO_0000269950" description="Macrolide export ATP-binding/permease protein MacB">
    <location>
        <begin position="1"/>
        <end position="644"/>
    </location>
</feature>
<feature type="transmembrane region" description="Helical" evidence="1">
    <location>
        <begin position="270"/>
        <end position="290"/>
    </location>
</feature>
<feature type="transmembrane region" description="Helical" evidence="1">
    <location>
        <begin position="524"/>
        <end position="544"/>
    </location>
</feature>
<feature type="transmembrane region" description="Helical" evidence="1">
    <location>
        <begin position="574"/>
        <end position="594"/>
    </location>
</feature>
<feature type="transmembrane region" description="Helical" evidence="1">
    <location>
        <begin position="607"/>
        <end position="627"/>
    </location>
</feature>
<feature type="domain" description="ABC transporter" evidence="1">
    <location>
        <begin position="4"/>
        <end position="242"/>
    </location>
</feature>
<feature type="binding site" evidence="1">
    <location>
        <begin position="40"/>
        <end position="47"/>
    </location>
    <ligand>
        <name>ATP</name>
        <dbReference type="ChEBI" id="CHEBI:30616"/>
    </ligand>
</feature>
<name>MACB_NEIMB</name>
<comment type="function">
    <text evidence="1">Non-canonical ABC transporter that contains transmembrane domains (TMD), which form a pore in the inner membrane, and an ATP-binding domain (NBD), which is responsible for energy generation. Confers resistance against macrolides.</text>
</comment>
<comment type="subunit">
    <text evidence="1">Homodimer.</text>
</comment>
<comment type="subcellular location">
    <subcellularLocation>
        <location evidence="1">Cell inner membrane</location>
        <topology evidence="1">Multi-pass membrane protein</topology>
    </subcellularLocation>
</comment>
<comment type="similarity">
    <text evidence="1">Belongs to the ABC transporter superfamily. Macrolide exporter (TC 3.A.1.122) family.</text>
</comment>
<accession>Q9K0N7</accession>
<sequence>MSLIECKNINRYFGSGENRVHILKDISLSIEKGDFVAIIGQSGSGKSTLMNILGCLDTAGSGSYRIDGIETAKMQPDELAALRRERFGFIFQRYNLLSSLTARDNVALPAVYMGAGGKERSARADKLLQDLGLASKEGNKPGELSGGQQQRVSIARALMNGGEIIFADEPTGALDTASGKNVMEIIRRLHEAGHTVIMVTHDPDIAANANRVIEIRDGEIISDTSKNPEIPASNVGRIREKASWSFYYDQFVEAFRMSVQAVLAHKMRSLLTMLGIIIGIASVVSVVALGNGSQKKILEDISSIGTNTISIFPGRGFGDRRSGRIKTLTIDDAKIIAKQSYVASATPMTSSGGTLTYRNTDLTASLYGVGEQYFDVRGLKLETGRLFDENDVKEDAQVVVIDQNVKDKLFADSDPLGKTILFRKRPLTVIGVMKKDENAFGNSDVLMLWSPYTTVMHQITGESHTNSITVKIKDNANTQVAEKGLTDLLKARHGTEDFFMNNSDSIRQIVESTTGTMKLLISSIALISLVVGGIGVMNIMLVSVTERTKEIGIRMAIGARRGNILQQFLIEAVLICVIGGLVGVGLSAAVSLVFNHFVTDFPMDISAMSVIGAVACSTGIGIAFGFMPANKAAKLNPIDALAQD</sequence>
<reference key="1">
    <citation type="journal article" date="2000" name="Science">
        <title>Complete genome sequence of Neisseria meningitidis serogroup B strain MC58.</title>
        <authorList>
            <person name="Tettelin H."/>
            <person name="Saunders N.J."/>
            <person name="Heidelberg J.F."/>
            <person name="Jeffries A.C."/>
            <person name="Nelson K.E."/>
            <person name="Eisen J.A."/>
            <person name="Ketchum K.A."/>
            <person name="Hood D.W."/>
            <person name="Peden J.F."/>
            <person name="Dodson R.J."/>
            <person name="Nelson W.C."/>
            <person name="Gwinn M.L."/>
            <person name="DeBoy R.T."/>
            <person name="Peterson J.D."/>
            <person name="Hickey E.K."/>
            <person name="Haft D.H."/>
            <person name="Salzberg S.L."/>
            <person name="White O."/>
            <person name="Fleischmann R.D."/>
            <person name="Dougherty B.A."/>
            <person name="Mason T.M."/>
            <person name="Ciecko A."/>
            <person name="Parksey D.S."/>
            <person name="Blair E."/>
            <person name="Cittone H."/>
            <person name="Clark E.B."/>
            <person name="Cotton M.D."/>
            <person name="Utterback T.R."/>
            <person name="Khouri H.M."/>
            <person name="Qin H."/>
            <person name="Vamathevan J.J."/>
            <person name="Gill J."/>
            <person name="Scarlato V."/>
            <person name="Masignani V."/>
            <person name="Pizza M."/>
            <person name="Grandi G."/>
            <person name="Sun L."/>
            <person name="Smith H.O."/>
            <person name="Fraser C.M."/>
            <person name="Moxon E.R."/>
            <person name="Rappuoli R."/>
            <person name="Venter J.C."/>
        </authorList>
    </citation>
    <scope>NUCLEOTIDE SEQUENCE [LARGE SCALE GENOMIC DNA]</scope>
    <source>
        <strain>ATCC BAA-335 / MC58</strain>
    </source>
</reference>
<proteinExistence type="inferred from homology"/>
<dbReference type="EC" id="7.6.2.-" evidence="1"/>
<dbReference type="EMBL" id="AE002098">
    <property type="protein sequence ID" value="AAF40978.1"/>
    <property type="molecule type" value="Genomic_DNA"/>
</dbReference>
<dbReference type="PIR" id="C81187">
    <property type="entry name" value="C81187"/>
</dbReference>
<dbReference type="RefSeq" id="NP_273594.1">
    <property type="nucleotide sequence ID" value="NC_003112.2"/>
</dbReference>
<dbReference type="RefSeq" id="WP_002247530.1">
    <property type="nucleotide sequence ID" value="NC_003112.2"/>
</dbReference>
<dbReference type="SMR" id="Q9K0N7"/>
<dbReference type="FunCoup" id="Q9K0N7">
    <property type="interactions" value="197"/>
</dbReference>
<dbReference type="STRING" id="122586.NMB0549"/>
<dbReference type="PaxDb" id="122586-NMB0549"/>
<dbReference type="KEGG" id="nme:NMB0549"/>
<dbReference type="PATRIC" id="fig|122586.8.peg.699"/>
<dbReference type="HOGENOM" id="CLU_000604_78_1_4"/>
<dbReference type="InParanoid" id="Q9K0N7"/>
<dbReference type="OrthoDB" id="4814201at2"/>
<dbReference type="Proteomes" id="UP000000425">
    <property type="component" value="Chromosome"/>
</dbReference>
<dbReference type="GO" id="GO:0005886">
    <property type="term" value="C:plasma membrane"/>
    <property type="evidence" value="ECO:0000318"/>
    <property type="project" value="GO_Central"/>
</dbReference>
<dbReference type="GO" id="GO:0005524">
    <property type="term" value="F:ATP binding"/>
    <property type="evidence" value="ECO:0007669"/>
    <property type="project" value="UniProtKB-KW"/>
</dbReference>
<dbReference type="GO" id="GO:0016887">
    <property type="term" value="F:ATP hydrolysis activity"/>
    <property type="evidence" value="ECO:0007669"/>
    <property type="project" value="InterPro"/>
</dbReference>
<dbReference type="GO" id="GO:0022857">
    <property type="term" value="F:transmembrane transporter activity"/>
    <property type="evidence" value="ECO:0000318"/>
    <property type="project" value="GO_Central"/>
</dbReference>
<dbReference type="GO" id="GO:0046677">
    <property type="term" value="P:response to antibiotic"/>
    <property type="evidence" value="ECO:0007669"/>
    <property type="project" value="UniProtKB-KW"/>
</dbReference>
<dbReference type="CDD" id="cd03255">
    <property type="entry name" value="ABC_MJ0796_LolCDE_FtsE"/>
    <property type="match status" value="1"/>
</dbReference>
<dbReference type="FunFam" id="3.40.50.300:FF:000032">
    <property type="entry name" value="Export ABC transporter ATP-binding protein"/>
    <property type="match status" value="1"/>
</dbReference>
<dbReference type="Gene3D" id="3.40.50.300">
    <property type="entry name" value="P-loop containing nucleotide triphosphate hydrolases"/>
    <property type="match status" value="1"/>
</dbReference>
<dbReference type="InterPro" id="IPR003593">
    <property type="entry name" value="AAA+_ATPase"/>
</dbReference>
<dbReference type="InterPro" id="IPR003838">
    <property type="entry name" value="ABC3_permease_C"/>
</dbReference>
<dbReference type="InterPro" id="IPR003439">
    <property type="entry name" value="ABC_transporter-like_ATP-bd"/>
</dbReference>
<dbReference type="InterPro" id="IPR017871">
    <property type="entry name" value="ABC_transporter-like_CS"/>
</dbReference>
<dbReference type="InterPro" id="IPR017911">
    <property type="entry name" value="MacB-like_ATP-bd"/>
</dbReference>
<dbReference type="InterPro" id="IPR025857">
    <property type="entry name" value="MacB_PCD"/>
</dbReference>
<dbReference type="InterPro" id="IPR050250">
    <property type="entry name" value="Macrolide_Exporter_MacB"/>
</dbReference>
<dbReference type="InterPro" id="IPR027417">
    <property type="entry name" value="P-loop_NTPase"/>
</dbReference>
<dbReference type="PANTHER" id="PTHR30572:SF14">
    <property type="entry name" value="MACROLIDE EXPORT ATP-BINDING_PERMEASE PROTEIN MACB"/>
    <property type="match status" value="1"/>
</dbReference>
<dbReference type="PANTHER" id="PTHR30572">
    <property type="entry name" value="MEMBRANE COMPONENT OF TRANSPORTER-RELATED"/>
    <property type="match status" value="1"/>
</dbReference>
<dbReference type="Pfam" id="PF00005">
    <property type="entry name" value="ABC_tran"/>
    <property type="match status" value="1"/>
</dbReference>
<dbReference type="Pfam" id="PF02687">
    <property type="entry name" value="FtsX"/>
    <property type="match status" value="1"/>
</dbReference>
<dbReference type="Pfam" id="PF12704">
    <property type="entry name" value="MacB_PCD"/>
    <property type="match status" value="1"/>
</dbReference>
<dbReference type="SMART" id="SM00382">
    <property type="entry name" value="AAA"/>
    <property type="match status" value="1"/>
</dbReference>
<dbReference type="SUPFAM" id="SSF52540">
    <property type="entry name" value="P-loop containing nucleoside triphosphate hydrolases"/>
    <property type="match status" value="1"/>
</dbReference>
<dbReference type="PROSITE" id="PS00211">
    <property type="entry name" value="ABC_TRANSPORTER_1"/>
    <property type="match status" value="1"/>
</dbReference>
<dbReference type="PROSITE" id="PS50893">
    <property type="entry name" value="ABC_TRANSPORTER_2"/>
    <property type="match status" value="1"/>
</dbReference>
<dbReference type="PROSITE" id="PS51267">
    <property type="entry name" value="MACB"/>
    <property type="match status" value="1"/>
</dbReference>